<sequence length="422" mass="46673">MPEVKVPELAESITEGTIAEWLKNVGDSVEKGEAILELETDKVNVEVVSEEAGVLSEQLASEGDTVEVGQAIAIIGEGSGNASKENSNDNTPQQNEETNNKKEETTNNSVDKAEVNQANDDNQQRINATPSARRYARENGVNLAEVSPKTNDVVRKEDIDKKQQAPASTQTTQQASAKEEKKYNQYPTKPVIREKMSRRKKTAAKKLLEVSNNTAMLTTFNEVDMTNVMELRKRKKEQFMKDHDGTKLGFMSFFTKASVAALKKYPEVNAEIDGDDMITKQYYDIGVAVSTDDGLLVPFVRDCDKKNFAEIEAEIANLAVKAREKKLGLDDMVNGSFTITNGGIFGSMMSTPIINGNQAAILGMHSIITRPIAIDQDTIENRPMMYIALSYDHRIIDGKEAVGFLKTIKELIENPEDLLLES</sequence>
<feature type="chain" id="PRO_0000288105" description="Dihydrolipoyllysine-residue succinyltransferase component of 2-oxoglutarate dehydrogenase complex">
    <location>
        <begin position="1"/>
        <end position="422"/>
    </location>
</feature>
<feature type="domain" description="Lipoyl-binding" evidence="3">
    <location>
        <begin position="1"/>
        <end position="76"/>
    </location>
</feature>
<feature type="domain" description="Peripheral subunit-binding (PSBD)" evidence="4">
    <location>
        <begin position="127"/>
        <end position="163"/>
    </location>
</feature>
<feature type="region of interest" description="Disordered" evidence="5">
    <location>
        <begin position="77"/>
        <end position="185"/>
    </location>
</feature>
<feature type="compositionally biased region" description="Polar residues" evidence="5">
    <location>
        <begin position="80"/>
        <end position="94"/>
    </location>
</feature>
<feature type="compositionally biased region" description="Polar residues" evidence="5">
    <location>
        <begin position="116"/>
        <end position="130"/>
    </location>
</feature>
<feature type="compositionally biased region" description="Basic and acidic residues" evidence="5">
    <location>
        <begin position="152"/>
        <end position="163"/>
    </location>
</feature>
<feature type="compositionally biased region" description="Low complexity" evidence="5">
    <location>
        <begin position="164"/>
        <end position="176"/>
    </location>
</feature>
<feature type="active site" evidence="2">
    <location>
        <position position="393"/>
    </location>
</feature>
<feature type="active site" evidence="2">
    <location>
        <position position="397"/>
    </location>
</feature>
<feature type="modified residue" description="N6-lipoyllysine" evidence="3">
    <location>
        <position position="42"/>
    </location>
</feature>
<evidence type="ECO:0000250" key="1"/>
<evidence type="ECO:0000250" key="2">
    <source>
        <dbReference type="UniProtKB" id="P0AFG6"/>
    </source>
</evidence>
<evidence type="ECO:0000255" key="3">
    <source>
        <dbReference type="PROSITE-ProRule" id="PRU01066"/>
    </source>
</evidence>
<evidence type="ECO:0000255" key="4">
    <source>
        <dbReference type="PROSITE-ProRule" id="PRU01170"/>
    </source>
</evidence>
<evidence type="ECO:0000256" key="5">
    <source>
        <dbReference type="SAM" id="MobiDB-lite"/>
    </source>
</evidence>
<evidence type="ECO:0000305" key="6"/>
<organism>
    <name type="scientific">Staphylococcus aureus (strain NCTC 8325 / PS 47)</name>
    <dbReference type="NCBI Taxonomy" id="93061"/>
    <lineage>
        <taxon>Bacteria</taxon>
        <taxon>Bacillati</taxon>
        <taxon>Bacillota</taxon>
        <taxon>Bacilli</taxon>
        <taxon>Bacillales</taxon>
        <taxon>Staphylococcaceae</taxon>
        <taxon>Staphylococcus</taxon>
    </lineage>
</organism>
<keyword id="KW-0012">Acyltransferase</keyword>
<keyword id="KW-0450">Lipoyl</keyword>
<keyword id="KW-1185">Reference proteome</keyword>
<keyword id="KW-0808">Transferase</keyword>
<keyword id="KW-0816">Tricarboxylic acid cycle</keyword>
<proteinExistence type="inferred from homology"/>
<reference key="1">
    <citation type="book" date="2006" name="Gram positive pathogens, 2nd edition">
        <title>The Staphylococcus aureus NCTC 8325 genome.</title>
        <editorList>
            <person name="Fischetti V."/>
            <person name="Novick R."/>
            <person name="Ferretti J."/>
            <person name="Portnoy D."/>
            <person name="Rood J."/>
        </editorList>
        <authorList>
            <person name="Gillaspy A.F."/>
            <person name="Worrell V."/>
            <person name="Orvis J."/>
            <person name="Roe B.A."/>
            <person name="Dyer D.W."/>
            <person name="Iandolo J.J."/>
        </authorList>
    </citation>
    <scope>NUCLEOTIDE SEQUENCE [LARGE SCALE GENOMIC DNA]</scope>
    <source>
        <strain>NCTC 8325 / PS 47</strain>
    </source>
</reference>
<gene>
    <name type="primary">odhB</name>
    <name type="synonym">sucB</name>
    <name type="ordered locus">SAOUHSC_01416</name>
</gene>
<protein>
    <recommendedName>
        <fullName>Dihydrolipoyllysine-residue succinyltransferase component of 2-oxoglutarate dehydrogenase complex</fullName>
        <ecNumber evidence="2">2.3.1.61</ecNumber>
    </recommendedName>
    <alternativeName>
        <fullName>2-oxoglutarate dehydrogenase complex component E2</fullName>
        <shortName>OGDC-E2</shortName>
    </alternativeName>
    <alternativeName>
        <fullName>Dihydrolipoamide succinyltransferase component of 2-oxoglutarate dehydrogenase complex</fullName>
    </alternativeName>
</protein>
<accession>Q2FYM2</accession>
<dbReference type="EC" id="2.3.1.61" evidence="2"/>
<dbReference type="EMBL" id="CP000253">
    <property type="protein sequence ID" value="ABD30510.1"/>
    <property type="molecule type" value="Genomic_DNA"/>
</dbReference>
<dbReference type="RefSeq" id="WP_001115440.1">
    <property type="nucleotide sequence ID" value="NZ_LS483365.1"/>
</dbReference>
<dbReference type="RefSeq" id="YP_499943.1">
    <property type="nucleotide sequence ID" value="NC_007795.1"/>
</dbReference>
<dbReference type="SMR" id="Q2FYM2"/>
<dbReference type="STRING" id="93061.SAOUHSC_01416"/>
<dbReference type="PaxDb" id="1280-SAXN108_1431"/>
<dbReference type="GeneID" id="3920648"/>
<dbReference type="KEGG" id="sao:SAOUHSC_01416"/>
<dbReference type="PATRIC" id="fig|93061.5.peg.1296"/>
<dbReference type="eggNOG" id="COG0508">
    <property type="taxonomic scope" value="Bacteria"/>
</dbReference>
<dbReference type="HOGENOM" id="CLU_016733_0_0_9"/>
<dbReference type="OrthoDB" id="9805770at2"/>
<dbReference type="UniPathway" id="UPA00868">
    <property type="reaction ID" value="UER00840"/>
</dbReference>
<dbReference type="PRO" id="PR:Q2FYM2"/>
<dbReference type="Proteomes" id="UP000008816">
    <property type="component" value="Chromosome"/>
</dbReference>
<dbReference type="GO" id="GO:0005829">
    <property type="term" value="C:cytosol"/>
    <property type="evidence" value="ECO:0000318"/>
    <property type="project" value="GO_Central"/>
</dbReference>
<dbReference type="GO" id="GO:0045252">
    <property type="term" value="C:oxoglutarate dehydrogenase complex"/>
    <property type="evidence" value="ECO:0007669"/>
    <property type="project" value="InterPro"/>
</dbReference>
<dbReference type="GO" id="GO:0004149">
    <property type="term" value="F:dihydrolipoyllysine-residue succinyltransferase activity"/>
    <property type="evidence" value="ECO:0000318"/>
    <property type="project" value="GO_Central"/>
</dbReference>
<dbReference type="GO" id="GO:0033512">
    <property type="term" value="P:L-lysine catabolic process to acetyl-CoA via saccharopine"/>
    <property type="evidence" value="ECO:0007669"/>
    <property type="project" value="UniProtKB-UniPathway"/>
</dbReference>
<dbReference type="GO" id="GO:0006099">
    <property type="term" value="P:tricarboxylic acid cycle"/>
    <property type="evidence" value="ECO:0000318"/>
    <property type="project" value="GO_Central"/>
</dbReference>
<dbReference type="CDD" id="cd06849">
    <property type="entry name" value="lipoyl_domain"/>
    <property type="match status" value="1"/>
</dbReference>
<dbReference type="FunFam" id="3.30.559.10:FF:000007">
    <property type="entry name" value="Dihydrolipoamide acetyltransferase component of pyruvate dehydrogenase complex"/>
    <property type="match status" value="1"/>
</dbReference>
<dbReference type="Gene3D" id="2.40.50.100">
    <property type="match status" value="1"/>
</dbReference>
<dbReference type="Gene3D" id="3.30.559.10">
    <property type="entry name" value="Chloramphenicol acetyltransferase-like domain"/>
    <property type="match status" value="1"/>
</dbReference>
<dbReference type="Gene3D" id="4.10.320.10">
    <property type="entry name" value="E3-binding domain"/>
    <property type="match status" value="1"/>
</dbReference>
<dbReference type="InterPro" id="IPR003016">
    <property type="entry name" value="2-oxoA_DH_lipoyl-BS"/>
</dbReference>
<dbReference type="InterPro" id="IPR050537">
    <property type="entry name" value="2-oxoacid_dehydrogenase"/>
</dbReference>
<dbReference type="InterPro" id="IPR001078">
    <property type="entry name" value="2-oxoacid_DH_actylTfrase"/>
</dbReference>
<dbReference type="InterPro" id="IPR000089">
    <property type="entry name" value="Biotin_lipoyl"/>
</dbReference>
<dbReference type="InterPro" id="IPR023213">
    <property type="entry name" value="CAT-like_dom_sf"/>
</dbReference>
<dbReference type="InterPro" id="IPR036625">
    <property type="entry name" value="E3-bd_dom_sf"/>
</dbReference>
<dbReference type="InterPro" id="IPR004167">
    <property type="entry name" value="PSBD"/>
</dbReference>
<dbReference type="InterPro" id="IPR011053">
    <property type="entry name" value="Single_hybrid_motif"/>
</dbReference>
<dbReference type="InterPro" id="IPR006255">
    <property type="entry name" value="SucB"/>
</dbReference>
<dbReference type="NCBIfam" id="NF004309">
    <property type="entry name" value="PRK05704.1"/>
    <property type="match status" value="1"/>
</dbReference>
<dbReference type="NCBIfam" id="TIGR01347">
    <property type="entry name" value="sucB"/>
    <property type="match status" value="1"/>
</dbReference>
<dbReference type="PANTHER" id="PTHR43416:SF5">
    <property type="entry name" value="DIHYDROLIPOYLLYSINE-RESIDUE SUCCINYLTRANSFERASE COMPONENT OF 2-OXOGLUTARATE DEHYDROGENASE COMPLEX, MITOCHONDRIAL"/>
    <property type="match status" value="1"/>
</dbReference>
<dbReference type="PANTHER" id="PTHR43416">
    <property type="entry name" value="DIHYDROLIPOYLLYSINE-RESIDUE SUCCINYLTRANSFERASE COMPONENT OF 2-OXOGLUTARATE DEHYDROGENASE COMPLEX, MITOCHONDRIAL-RELATED"/>
    <property type="match status" value="1"/>
</dbReference>
<dbReference type="Pfam" id="PF00198">
    <property type="entry name" value="2-oxoacid_dh"/>
    <property type="match status" value="1"/>
</dbReference>
<dbReference type="Pfam" id="PF00364">
    <property type="entry name" value="Biotin_lipoyl"/>
    <property type="match status" value="1"/>
</dbReference>
<dbReference type="Pfam" id="PF02817">
    <property type="entry name" value="E3_binding"/>
    <property type="match status" value="1"/>
</dbReference>
<dbReference type="SUPFAM" id="SSF52777">
    <property type="entry name" value="CoA-dependent acyltransferases"/>
    <property type="match status" value="1"/>
</dbReference>
<dbReference type="SUPFAM" id="SSF51230">
    <property type="entry name" value="Single hybrid motif"/>
    <property type="match status" value="1"/>
</dbReference>
<dbReference type="PROSITE" id="PS50968">
    <property type="entry name" value="BIOTINYL_LIPOYL"/>
    <property type="match status" value="1"/>
</dbReference>
<dbReference type="PROSITE" id="PS00189">
    <property type="entry name" value="LIPOYL"/>
    <property type="match status" value="1"/>
</dbReference>
<dbReference type="PROSITE" id="PS51826">
    <property type="entry name" value="PSBD"/>
    <property type="match status" value="1"/>
</dbReference>
<comment type="function">
    <text evidence="2">E2 component of the 2-oxoglutarate dehydrogenase (OGDH) complex which catalyzes the second step in the conversion of 2-oxoglutarate to succinyl-CoA and CO(2).</text>
</comment>
<comment type="catalytic activity">
    <reaction evidence="2">
        <text>N(6)-[(R)-dihydrolipoyl]-L-lysyl-[protein] + succinyl-CoA = N(6)-[(R)-S(8)-succinyldihydrolipoyl]-L-lysyl-[protein] + CoA</text>
        <dbReference type="Rhea" id="RHEA:15213"/>
        <dbReference type="Rhea" id="RHEA-COMP:10475"/>
        <dbReference type="Rhea" id="RHEA-COMP:20092"/>
        <dbReference type="ChEBI" id="CHEBI:57287"/>
        <dbReference type="ChEBI" id="CHEBI:57292"/>
        <dbReference type="ChEBI" id="CHEBI:83100"/>
        <dbReference type="ChEBI" id="CHEBI:83120"/>
        <dbReference type="EC" id="2.3.1.61"/>
    </reaction>
</comment>
<comment type="cofactor">
    <cofactor evidence="1">
        <name>(R)-lipoate</name>
        <dbReference type="ChEBI" id="CHEBI:83088"/>
    </cofactor>
    <text evidence="1">Binds 1 lipoyl cofactor covalently.</text>
</comment>
<comment type="pathway">
    <text>Amino-acid degradation; L-lysine degradation via saccharopine pathway; glutaryl-CoA from L-lysine: step 6/6.</text>
</comment>
<comment type="subunit">
    <text evidence="2">Forms a 24-polypeptide structural core with octahedral symmetry. Part of the 2-oxoglutarate dehydrogenase (OGDH) complex composed of E1 (2-oxoglutarate dehydrogenase), E2 (dihydrolipoamide succinyltransferase) and E3 (dihydrolipoamide dehydrogenase); the complex contains multiple copies of the three enzymatic components (E1, E2 and E3).</text>
</comment>
<comment type="similarity">
    <text evidence="6">Belongs to the 2-oxoacid dehydrogenase family.</text>
</comment>
<name>ODO2_STAA8</name>